<organism>
    <name type="scientific">Plasmodium yoelii yoelii</name>
    <dbReference type="NCBI Taxonomy" id="73239"/>
    <lineage>
        <taxon>Eukaryota</taxon>
        <taxon>Sar</taxon>
        <taxon>Alveolata</taxon>
        <taxon>Apicomplexa</taxon>
        <taxon>Aconoidasida</taxon>
        <taxon>Haemosporida</taxon>
        <taxon>Plasmodiidae</taxon>
        <taxon>Plasmodium</taxon>
        <taxon>Plasmodium (Vinckeia)</taxon>
    </lineage>
</organism>
<reference key="1">
    <citation type="journal article" date="2002" name="Nature">
        <title>Genome sequence and comparative analysis of the model rodent malaria parasite Plasmodium yoelii yoelii.</title>
        <authorList>
            <person name="Carlton J.M."/>
            <person name="Angiuoli S.V."/>
            <person name="Suh B.B."/>
            <person name="Kooij T.W."/>
            <person name="Pertea M."/>
            <person name="Silva J.C."/>
            <person name="Ermolaeva M.D."/>
            <person name="Allen J.E."/>
            <person name="Selengut J.D."/>
            <person name="Koo H.L."/>
            <person name="Peterson J.D."/>
            <person name="Pop M."/>
            <person name="Kosack D.S."/>
            <person name="Shumway M.F."/>
            <person name="Bidwell S.L."/>
            <person name="Shallom S.J."/>
            <person name="van Aken S.E."/>
            <person name="Riedmuller S.B."/>
            <person name="Feldblyum T.V."/>
            <person name="Cho J.K."/>
            <person name="Quackenbush J."/>
            <person name="Sedegah M."/>
            <person name="Shoaibi A."/>
            <person name="Cummings L.M."/>
            <person name="Florens L."/>
            <person name="Yates J.R. III"/>
            <person name="Raine J.D."/>
            <person name="Sinden R.E."/>
            <person name="Harris M.A."/>
            <person name="Cunningham D.A."/>
            <person name="Preiser P.R."/>
            <person name="Bergman L.W."/>
            <person name="Vaidya A.B."/>
            <person name="van Lin L.H."/>
            <person name="Janse C.J."/>
            <person name="Waters A.P."/>
            <person name="Smith H.O."/>
            <person name="White O.R."/>
            <person name="Salzberg S.L."/>
            <person name="Venter J.C."/>
            <person name="Fraser C.M."/>
            <person name="Hoffman S.L."/>
            <person name="Gardner M.J."/>
            <person name="Carucci D.J."/>
        </authorList>
    </citation>
    <scope>NUCLEOTIDE SEQUENCE [LARGE SCALE GENOMIC DNA]</scope>
    <source>
        <strain>17XNL</strain>
    </source>
</reference>
<feature type="signal peptide" evidence="2">
    <location>
        <begin position="1"/>
        <end position="29"/>
    </location>
</feature>
<feature type="chain" id="PRO_0000034358" description="T-cell immunomodulatory protein homolog">
    <location>
        <begin position="30"/>
        <end position="701"/>
    </location>
</feature>
<feature type="topological domain" description="Extracellular" evidence="2">
    <location>
        <begin position="30"/>
        <end position="657"/>
    </location>
</feature>
<feature type="transmembrane region" description="Helical" evidence="2">
    <location>
        <begin position="658"/>
        <end position="678"/>
    </location>
</feature>
<feature type="topological domain" description="Cytoplasmic" evidence="2">
    <location>
        <begin position="679"/>
        <end position="701"/>
    </location>
</feature>
<feature type="glycosylation site" description="N-linked (GlcNAc...) asparagine" evidence="2">
    <location>
        <position position="148"/>
    </location>
</feature>
<feature type="glycosylation site" description="N-linked (GlcNAc...) asparagine" evidence="2">
    <location>
        <position position="180"/>
    </location>
</feature>
<feature type="glycosylation site" description="N-linked (GlcNAc...) asparagine" evidence="2">
    <location>
        <position position="217"/>
    </location>
</feature>
<feature type="glycosylation site" description="N-linked (GlcNAc...) asparagine" evidence="2">
    <location>
        <position position="258"/>
    </location>
</feature>
<feature type="glycosylation site" description="N-linked (GlcNAc...) asparagine" evidence="2">
    <location>
        <position position="458"/>
    </location>
</feature>
<feature type="glycosylation site" description="N-linked (GlcNAc...) asparagine" evidence="2">
    <location>
        <position position="522"/>
    </location>
</feature>
<feature type="glycosylation site" description="N-linked (GlcNAc...) asparagine" evidence="2">
    <location>
        <position position="571"/>
    </location>
</feature>
<gene>
    <name type="ORF">PY00695</name>
</gene>
<name>TIP_PLAYO</name>
<keyword id="KW-0325">Glycoprotein</keyword>
<keyword id="KW-0472">Membrane</keyword>
<keyword id="KW-1185">Reference proteome</keyword>
<keyword id="KW-0732">Signal</keyword>
<keyword id="KW-0812">Transmembrane</keyword>
<keyword id="KW-1133">Transmembrane helix</keyword>
<protein>
    <recommendedName>
        <fullName>T-cell immunomodulatory protein homolog</fullName>
    </recommendedName>
</protein>
<dbReference type="EMBL" id="AABL01000189">
    <property type="protein sequence ID" value="EAA17888.1"/>
    <property type="molecule type" value="Genomic_DNA"/>
</dbReference>
<dbReference type="FunCoup" id="Q7RRM4">
    <property type="interactions" value="28"/>
</dbReference>
<dbReference type="PaxDb" id="73239-Q7RRM4"/>
<dbReference type="EnsemblProtists" id="EAA17888">
    <property type="protein sequence ID" value="EAA17888"/>
    <property type="gene ID" value="EAA17888"/>
</dbReference>
<dbReference type="KEGG" id="pyo:PY17X_1247000"/>
<dbReference type="VEuPathDB" id="PlasmoDB:Py17XNL_001205317"/>
<dbReference type="InParanoid" id="Q7RRM4"/>
<dbReference type="Proteomes" id="UP000008553">
    <property type="component" value="Unassembled WGS sequence"/>
</dbReference>
<dbReference type="GO" id="GO:0005886">
    <property type="term" value="C:plasma membrane"/>
    <property type="evidence" value="ECO:0007669"/>
    <property type="project" value="TreeGrafter"/>
</dbReference>
<dbReference type="Gene3D" id="2.130.10.130">
    <property type="entry name" value="Integrin alpha, N-terminal"/>
    <property type="match status" value="1"/>
</dbReference>
<dbReference type="InterPro" id="IPR013517">
    <property type="entry name" value="FG-GAP"/>
</dbReference>
<dbReference type="InterPro" id="IPR028994">
    <property type="entry name" value="Integrin_alpha_N"/>
</dbReference>
<dbReference type="InterPro" id="IPR024881">
    <property type="entry name" value="Tip"/>
</dbReference>
<dbReference type="PANTHER" id="PTHR13412:SF0">
    <property type="entry name" value="T-CELL IMMUNOMODULATORY PROTEIN"/>
    <property type="match status" value="1"/>
</dbReference>
<dbReference type="PANTHER" id="PTHR13412">
    <property type="entry name" value="T-CELL IMMUNOMODULATORY PROTEIN HOMOLOG"/>
    <property type="match status" value="1"/>
</dbReference>
<dbReference type="Pfam" id="PF23122">
    <property type="entry name" value="C2_ITFG1"/>
    <property type="match status" value="1"/>
</dbReference>
<dbReference type="Pfam" id="PF13517">
    <property type="entry name" value="FG-GAP_3"/>
    <property type="match status" value="1"/>
</dbReference>
<dbReference type="SUPFAM" id="SSF69318">
    <property type="entry name" value="Integrin alpha N-terminal domain"/>
    <property type="match status" value="1"/>
</dbReference>
<accession>Q7RRM4</accession>
<sequence length="701" mass="80082">MVKCGKYVLILELLLLTLLYNLIKRVSNSGETVSSFVDGYNWNIMERWKAITPKEKLEYKVNYDLGLDIDAEIGDFGDYNSDVKTDLILFKYDKTTMISTIFVYIFSPSENKFIYHTEAKLEGKIVNLMVIDLNFDGSLDALVLFKDNSSQDKFYISTFIQNENDELEEKFNTKKKETENETISDFEDQNFYFTNIHPLLCDINNDGLPDLIAQHPNKSKSFSRFIWINDGDGGFKSILWENLNIFEYTDISEISNPNSSAIVDLNGDCKADLVFTVINKKNTKRIFLEIWINKIVDGKSLYVKADEDYMLPANSMQILFADFNADGSIDMVVPTCVKSSSCNYCCTSDDKIYFIPNIQTKICENSWTKNEDNKCRLASNLCSESDFEFAKKLSPDYISLLDDKGLHFSGDASYPSYLSVGDVDDDGYLDLLVSLRNDKGQKFVRIYKNEQISNNEQNHTDIRRFYNYYQFISSLEESTPDVYNAAFFDIFENGILDVIIFGTYNSNSKIKKYSSVGFVRSNETDSLFLKSTALNGICVNDCYKEKDKISTKTLGGNAHGPTFKITVIDANGTKSSKIGIQKSQSAHSPLQLPYVLFGLGRTSNYVEEFYVGMPTHEHSYYNMWVSIIPNSHIIVIPYPLDDSNKWQIQLSVNPSNKFYSIIYITLICLSVIGVLIFILDRKEKIEDSKEEMGFKSHFVIG</sequence>
<proteinExistence type="inferred from homology"/>
<comment type="function">
    <text evidence="1">May protect the parasite against attack by the host immune system by immunomodulation.</text>
</comment>
<comment type="subcellular location">
    <subcellularLocation>
        <location evidence="3">Membrane</location>
        <topology evidence="3">Single-pass type I membrane protein</topology>
    </subcellularLocation>
</comment>
<comment type="similarity">
    <text evidence="3">Belongs to the TIP family.</text>
</comment>
<evidence type="ECO:0000250" key="1"/>
<evidence type="ECO:0000255" key="2"/>
<evidence type="ECO:0000305" key="3"/>